<name>RBFA_SHIF8</name>
<gene>
    <name evidence="1" type="primary">rbfA</name>
    <name type="ordered locus">SFV_3197</name>
</gene>
<reference key="1">
    <citation type="journal article" date="2006" name="BMC Genomics">
        <title>Complete genome sequence of Shigella flexneri 5b and comparison with Shigella flexneri 2a.</title>
        <authorList>
            <person name="Nie H."/>
            <person name="Yang F."/>
            <person name="Zhang X."/>
            <person name="Yang J."/>
            <person name="Chen L."/>
            <person name="Wang J."/>
            <person name="Xiong Z."/>
            <person name="Peng J."/>
            <person name="Sun L."/>
            <person name="Dong J."/>
            <person name="Xue Y."/>
            <person name="Xu X."/>
            <person name="Chen S."/>
            <person name="Yao Z."/>
            <person name="Shen Y."/>
            <person name="Jin Q."/>
        </authorList>
    </citation>
    <scope>NUCLEOTIDE SEQUENCE [LARGE SCALE GENOMIC DNA]</scope>
    <source>
        <strain>8401</strain>
    </source>
</reference>
<feature type="chain" id="PRO_1000000211" description="Ribosome-binding factor A">
    <location>
        <begin position="1"/>
        <end position="133"/>
    </location>
</feature>
<accession>Q0T0B4</accession>
<dbReference type="EMBL" id="CP000266">
    <property type="protein sequence ID" value="ABF05251.1"/>
    <property type="molecule type" value="Genomic_DNA"/>
</dbReference>
<dbReference type="RefSeq" id="WP_001040205.1">
    <property type="nucleotide sequence ID" value="NC_008258.1"/>
</dbReference>
<dbReference type="SMR" id="Q0T0B4"/>
<dbReference type="GeneID" id="93778816"/>
<dbReference type="KEGG" id="sfv:SFV_3197"/>
<dbReference type="HOGENOM" id="CLU_089475_5_0_6"/>
<dbReference type="Proteomes" id="UP000000659">
    <property type="component" value="Chromosome"/>
</dbReference>
<dbReference type="GO" id="GO:0005829">
    <property type="term" value="C:cytosol"/>
    <property type="evidence" value="ECO:0007669"/>
    <property type="project" value="TreeGrafter"/>
</dbReference>
<dbReference type="GO" id="GO:0043024">
    <property type="term" value="F:ribosomal small subunit binding"/>
    <property type="evidence" value="ECO:0007669"/>
    <property type="project" value="TreeGrafter"/>
</dbReference>
<dbReference type="GO" id="GO:0030490">
    <property type="term" value="P:maturation of SSU-rRNA"/>
    <property type="evidence" value="ECO:0007669"/>
    <property type="project" value="UniProtKB-UniRule"/>
</dbReference>
<dbReference type="FunFam" id="3.30.300.20:FF:000007">
    <property type="entry name" value="Ribosome-binding factor A"/>
    <property type="match status" value="1"/>
</dbReference>
<dbReference type="Gene3D" id="3.30.300.20">
    <property type="match status" value="1"/>
</dbReference>
<dbReference type="HAMAP" id="MF_00003">
    <property type="entry name" value="RbfA"/>
    <property type="match status" value="1"/>
</dbReference>
<dbReference type="InterPro" id="IPR015946">
    <property type="entry name" value="KH_dom-like_a/b"/>
</dbReference>
<dbReference type="InterPro" id="IPR000238">
    <property type="entry name" value="RbfA"/>
</dbReference>
<dbReference type="InterPro" id="IPR023799">
    <property type="entry name" value="RbfA_dom_sf"/>
</dbReference>
<dbReference type="InterPro" id="IPR020053">
    <property type="entry name" value="Ribosome-bd_factorA_CS"/>
</dbReference>
<dbReference type="NCBIfam" id="TIGR00082">
    <property type="entry name" value="rbfA"/>
    <property type="match status" value="1"/>
</dbReference>
<dbReference type="PANTHER" id="PTHR33515">
    <property type="entry name" value="RIBOSOME-BINDING FACTOR A, CHLOROPLASTIC-RELATED"/>
    <property type="match status" value="1"/>
</dbReference>
<dbReference type="PANTHER" id="PTHR33515:SF1">
    <property type="entry name" value="RIBOSOME-BINDING FACTOR A, CHLOROPLASTIC-RELATED"/>
    <property type="match status" value="1"/>
</dbReference>
<dbReference type="Pfam" id="PF02033">
    <property type="entry name" value="RBFA"/>
    <property type="match status" value="1"/>
</dbReference>
<dbReference type="SUPFAM" id="SSF89919">
    <property type="entry name" value="Ribosome-binding factor A, RbfA"/>
    <property type="match status" value="1"/>
</dbReference>
<dbReference type="PROSITE" id="PS01319">
    <property type="entry name" value="RBFA"/>
    <property type="match status" value="1"/>
</dbReference>
<keyword id="KW-0963">Cytoplasm</keyword>
<keyword id="KW-0690">Ribosome biogenesis</keyword>
<organism>
    <name type="scientific">Shigella flexneri serotype 5b (strain 8401)</name>
    <dbReference type="NCBI Taxonomy" id="373384"/>
    <lineage>
        <taxon>Bacteria</taxon>
        <taxon>Pseudomonadati</taxon>
        <taxon>Pseudomonadota</taxon>
        <taxon>Gammaproteobacteria</taxon>
        <taxon>Enterobacterales</taxon>
        <taxon>Enterobacteriaceae</taxon>
        <taxon>Shigella</taxon>
    </lineage>
</organism>
<comment type="function">
    <text evidence="1">One of several proteins that assist in the late maturation steps of the functional core of the 30S ribosomal subunit. Associates with free 30S ribosomal subunits (but not with 30S subunits that are part of 70S ribosomes or polysomes). Required for efficient processing of 16S rRNA. May interact with the 5'-terminal helix region of 16S rRNA.</text>
</comment>
<comment type="subunit">
    <text evidence="1">Monomer. Binds 30S ribosomal subunits, but not 50S ribosomal subunits or 70S ribosomes.</text>
</comment>
<comment type="subcellular location">
    <subcellularLocation>
        <location evidence="1">Cytoplasm</location>
    </subcellularLocation>
</comment>
<comment type="similarity">
    <text evidence="1">Belongs to the RbfA family.</text>
</comment>
<evidence type="ECO:0000255" key="1">
    <source>
        <dbReference type="HAMAP-Rule" id="MF_00003"/>
    </source>
</evidence>
<sequence length="133" mass="15154">MAKEFGRPQRVAQEMQKEIALILQREIKDPRLGMMTTVSGVEMSRDLAYAKVYVTFLNDKDEDAVKAGIKALQEASGFIRSLLGKAMRLRIVPELTFFYDNSLVEGMRMSNLVTSVVKHDEERRVNPDDSKED</sequence>
<proteinExistence type="inferred from homology"/>
<protein>
    <recommendedName>
        <fullName evidence="1">Ribosome-binding factor A</fullName>
    </recommendedName>
</protein>